<feature type="chain" id="PRO_0000192440" description="Large-conductance mechanosensitive channel">
    <location>
        <begin position="1"/>
        <end position="136"/>
    </location>
</feature>
<feature type="transmembrane region" description="Helical" evidence="1">
    <location>
        <begin position="10"/>
        <end position="30"/>
    </location>
</feature>
<feature type="transmembrane region" description="Helical" evidence="1">
    <location>
        <begin position="76"/>
        <end position="96"/>
    </location>
</feature>
<organism>
    <name type="scientific">Escherichia coli O157:H7</name>
    <dbReference type="NCBI Taxonomy" id="83334"/>
    <lineage>
        <taxon>Bacteria</taxon>
        <taxon>Pseudomonadati</taxon>
        <taxon>Pseudomonadota</taxon>
        <taxon>Gammaproteobacteria</taxon>
        <taxon>Enterobacterales</taxon>
        <taxon>Enterobacteriaceae</taxon>
        <taxon>Escherichia</taxon>
    </lineage>
</organism>
<gene>
    <name evidence="1" type="primary">mscL</name>
    <name type="ordered locus">Z4661</name>
    <name type="ordered locus">ECs4156</name>
</gene>
<keyword id="KW-0997">Cell inner membrane</keyword>
<keyword id="KW-1003">Cell membrane</keyword>
<keyword id="KW-0407">Ion channel</keyword>
<keyword id="KW-0406">Ion transport</keyword>
<keyword id="KW-0472">Membrane</keyword>
<keyword id="KW-1185">Reference proteome</keyword>
<keyword id="KW-0812">Transmembrane</keyword>
<keyword id="KW-1133">Transmembrane helix</keyword>
<keyword id="KW-0813">Transport</keyword>
<proteinExistence type="inferred from homology"/>
<evidence type="ECO:0000255" key="1">
    <source>
        <dbReference type="HAMAP-Rule" id="MF_00115"/>
    </source>
</evidence>
<evidence type="ECO:0000305" key="2"/>
<protein>
    <recommendedName>
        <fullName evidence="1">Large-conductance mechanosensitive channel</fullName>
    </recommendedName>
</protein>
<comment type="function">
    <text evidence="1">Channel that opens in response to stretch forces in the membrane lipid bilayer. May participate in the regulation of osmotic pressure changes within the cell.</text>
</comment>
<comment type="subunit">
    <text evidence="1">Homopentamer.</text>
</comment>
<comment type="subcellular location">
    <subcellularLocation>
        <location evidence="1">Cell inner membrane</location>
        <topology evidence="1">Multi-pass membrane protein</topology>
    </subcellularLocation>
</comment>
<comment type="similarity">
    <text evidence="1 2">Belongs to the MscL family.</text>
</comment>
<sequence>MSIIKEFREFAMRGNVVDLAVGVIIGAAFGKIVSSLVADIIMPPLGLLIGGIDFKQFAVTLRDAQGDIPAVVMHYGVFIQNVFDFLIVAFAIFMAIKLINKLNRKKEEPAAAPAPTKEEVLLTEIRDLLKEQNNRS</sequence>
<accession>P0A743</accession>
<accession>P23867</accession>
<name>MSCL_ECO57</name>
<reference key="1">
    <citation type="journal article" date="2001" name="Nature">
        <title>Genome sequence of enterohaemorrhagic Escherichia coli O157:H7.</title>
        <authorList>
            <person name="Perna N.T."/>
            <person name="Plunkett G. III"/>
            <person name="Burland V."/>
            <person name="Mau B."/>
            <person name="Glasner J.D."/>
            <person name="Rose D.J."/>
            <person name="Mayhew G.F."/>
            <person name="Evans P.S."/>
            <person name="Gregor J."/>
            <person name="Kirkpatrick H.A."/>
            <person name="Posfai G."/>
            <person name="Hackett J."/>
            <person name="Klink S."/>
            <person name="Boutin A."/>
            <person name="Shao Y."/>
            <person name="Miller L."/>
            <person name="Grotbeck E.J."/>
            <person name="Davis N.W."/>
            <person name="Lim A."/>
            <person name="Dimalanta E.T."/>
            <person name="Potamousis K."/>
            <person name="Apodaca J."/>
            <person name="Anantharaman T.S."/>
            <person name="Lin J."/>
            <person name="Yen G."/>
            <person name="Schwartz D.C."/>
            <person name="Welch R.A."/>
            <person name="Blattner F.R."/>
        </authorList>
    </citation>
    <scope>NUCLEOTIDE SEQUENCE [LARGE SCALE GENOMIC DNA]</scope>
    <source>
        <strain>O157:H7 / EDL933 / ATCC 700927 / EHEC</strain>
    </source>
</reference>
<reference key="2">
    <citation type="journal article" date="2001" name="DNA Res.">
        <title>Complete genome sequence of enterohemorrhagic Escherichia coli O157:H7 and genomic comparison with a laboratory strain K-12.</title>
        <authorList>
            <person name="Hayashi T."/>
            <person name="Makino K."/>
            <person name="Ohnishi M."/>
            <person name="Kurokawa K."/>
            <person name="Ishii K."/>
            <person name="Yokoyama K."/>
            <person name="Han C.-G."/>
            <person name="Ohtsubo E."/>
            <person name="Nakayama K."/>
            <person name="Murata T."/>
            <person name="Tanaka M."/>
            <person name="Tobe T."/>
            <person name="Iida T."/>
            <person name="Takami H."/>
            <person name="Honda T."/>
            <person name="Sasakawa C."/>
            <person name="Ogasawara N."/>
            <person name="Yasunaga T."/>
            <person name="Kuhara S."/>
            <person name="Shiba T."/>
            <person name="Hattori M."/>
            <person name="Shinagawa H."/>
        </authorList>
    </citation>
    <scope>NUCLEOTIDE SEQUENCE [LARGE SCALE GENOMIC DNA]</scope>
    <source>
        <strain>O157:H7 / Sakai / RIMD 0509952 / EHEC</strain>
    </source>
</reference>
<dbReference type="EMBL" id="AE005174">
    <property type="protein sequence ID" value="AAG58412.1"/>
    <property type="molecule type" value="Genomic_DNA"/>
</dbReference>
<dbReference type="EMBL" id="BA000007">
    <property type="protein sequence ID" value="BAB37579.1"/>
    <property type="molecule type" value="Genomic_DNA"/>
</dbReference>
<dbReference type="PIR" id="D91148">
    <property type="entry name" value="D91148"/>
</dbReference>
<dbReference type="PIR" id="H85993">
    <property type="entry name" value="H85993"/>
</dbReference>
<dbReference type="RefSeq" id="NP_312183.1">
    <property type="nucleotide sequence ID" value="NC_002695.1"/>
</dbReference>
<dbReference type="RefSeq" id="WP_000022442.1">
    <property type="nucleotide sequence ID" value="NZ_SWKA01000005.1"/>
</dbReference>
<dbReference type="SMR" id="P0A743"/>
<dbReference type="STRING" id="155864.Z4661"/>
<dbReference type="GeneID" id="75173461"/>
<dbReference type="GeneID" id="915989"/>
<dbReference type="KEGG" id="ece:Z4661"/>
<dbReference type="KEGG" id="ecs:ECs_4156"/>
<dbReference type="PATRIC" id="fig|386585.9.peg.4339"/>
<dbReference type="eggNOG" id="COG1970">
    <property type="taxonomic scope" value="Bacteria"/>
</dbReference>
<dbReference type="HOGENOM" id="CLU_095787_0_0_6"/>
<dbReference type="OMA" id="FKTFAMR"/>
<dbReference type="Proteomes" id="UP000000558">
    <property type="component" value="Chromosome"/>
</dbReference>
<dbReference type="Proteomes" id="UP000002519">
    <property type="component" value="Chromosome"/>
</dbReference>
<dbReference type="GO" id="GO:0005886">
    <property type="term" value="C:plasma membrane"/>
    <property type="evidence" value="ECO:0007669"/>
    <property type="project" value="UniProtKB-SubCell"/>
</dbReference>
<dbReference type="GO" id="GO:0008381">
    <property type="term" value="F:mechanosensitive monoatomic ion channel activity"/>
    <property type="evidence" value="ECO:0007669"/>
    <property type="project" value="UniProtKB-UniRule"/>
</dbReference>
<dbReference type="FunFam" id="1.10.1200.120:FF:000001">
    <property type="entry name" value="Large-conductance mechanosensitive channel"/>
    <property type="match status" value="1"/>
</dbReference>
<dbReference type="Gene3D" id="1.10.1200.120">
    <property type="entry name" value="Large-conductance mechanosensitive channel, MscL, domain 1"/>
    <property type="match status" value="1"/>
</dbReference>
<dbReference type="HAMAP" id="MF_00115">
    <property type="entry name" value="MscL"/>
    <property type="match status" value="1"/>
</dbReference>
<dbReference type="InterPro" id="IPR019823">
    <property type="entry name" value="Mechanosensitive_channel_CS"/>
</dbReference>
<dbReference type="InterPro" id="IPR001185">
    <property type="entry name" value="MS_channel"/>
</dbReference>
<dbReference type="InterPro" id="IPR037673">
    <property type="entry name" value="MSC/AndL"/>
</dbReference>
<dbReference type="InterPro" id="IPR036019">
    <property type="entry name" value="MscL_channel"/>
</dbReference>
<dbReference type="NCBIfam" id="TIGR00220">
    <property type="entry name" value="mscL"/>
    <property type="match status" value="1"/>
</dbReference>
<dbReference type="NCBIfam" id="NF001841">
    <property type="entry name" value="PRK00567.1-1"/>
    <property type="match status" value="1"/>
</dbReference>
<dbReference type="NCBIfam" id="NF001843">
    <property type="entry name" value="PRK00567.1-4"/>
    <property type="match status" value="1"/>
</dbReference>
<dbReference type="PANTHER" id="PTHR30266:SF2">
    <property type="entry name" value="LARGE-CONDUCTANCE MECHANOSENSITIVE CHANNEL"/>
    <property type="match status" value="1"/>
</dbReference>
<dbReference type="PANTHER" id="PTHR30266">
    <property type="entry name" value="MECHANOSENSITIVE CHANNEL MSCL"/>
    <property type="match status" value="1"/>
</dbReference>
<dbReference type="Pfam" id="PF01741">
    <property type="entry name" value="MscL"/>
    <property type="match status" value="1"/>
</dbReference>
<dbReference type="PRINTS" id="PR01264">
    <property type="entry name" value="MECHCHANNEL"/>
</dbReference>
<dbReference type="SUPFAM" id="SSF81330">
    <property type="entry name" value="Gated mechanosensitive channel"/>
    <property type="match status" value="1"/>
</dbReference>
<dbReference type="PROSITE" id="PS01327">
    <property type="entry name" value="MSCL"/>
    <property type="match status" value="1"/>
</dbReference>